<proteinExistence type="inferred from homology"/>
<accession>C1CWI8</accession>
<reference key="1">
    <citation type="journal article" date="2009" name="PLoS Genet.">
        <title>Alliance of proteomics and genomics to unravel the specificities of Sahara bacterium Deinococcus deserti.</title>
        <authorList>
            <person name="de Groot A."/>
            <person name="Dulermo R."/>
            <person name="Ortet P."/>
            <person name="Blanchard L."/>
            <person name="Guerin P."/>
            <person name="Fernandez B."/>
            <person name="Vacherie B."/>
            <person name="Dossat C."/>
            <person name="Jolivet E."/>
            <person name="Siguier P."/>
            <person name="Chandler M."/>
            <person name="Barakat M."/>
            <person name="Dedieu A."/>
            <person name="Barbe V."/>
            <person name="Heulin T."/>
            <person name="Sommer S."/>
            <person name="Achouak W."/>
            <person name="Armengaud J."/>
        </authorList>
    </citation>
    <scope>NUCLEOTIDE SEQUENCE [LARGE SCALE GENOMIC DNA]</scope>
    <source>
        <strain>DSM 17065 / CIP 109153 / LMG 22923 / VCD115</strain>
    </source>
</reference>
<comment type="catalytic activity">
    <reaction evidence="1">
        <text>(S)-4-amino-5-oxopentanoate = 5-aminolevulinate</text>
        <dbReference type="Rhea" id="RHEA:14265"/>
        <dbReference type="ChEBI" id="CHEBI:57501"/>
        <dbReference type="ChEBI" id="CHEBI:356416"/>
        <dbReference type="EC" id="5.4.3.8"/>
    </reaction>
</comment>
<comment type="cofactor">
    <cofactor evidence="1">
        <name>pyridoxal 5'-phosphate</name>
        <dbReference type="ChEBI" id="CHEBI:597326"/>
    </cofactor>
</comment>
<comment type="pathway">
    <text evidence="1">Porphyrin-containing compound metabolism; protoporphyrin-IX biosynthesis; 5-aminolevulinate from L-glutamyl-tRNA(Glu): step 2/2.</text>
</comment>
<comment type="subunit">
    <text evidence="1">Homodimer.</text>
</comment>
<comment type="subcellular location">
    <subcellularLocation>
        <location evidence="1">Cytoplasm</location>
    </subcellularLocation>
</comment>
<comment type="similarity">
    <text evidence="1">Belongs to the class-III pyridoxal-phosphate-dependent aminotransferase family. HemL subfamily.</text>
</comment>
<protein>
    <recommendedName>
        <fullName evidence="1">Glutamate-1-semialdehyde 2,1-aminomutase</fullName>
        <shortName evidence="1">GSA</shortName>
        <ecNumber evidence="1">5.4.3.8</ecNumber>
    </recommendedName>
    <alternativeName>
        <fullName evidence="1">Glutamate-1-semialdehyde aminotransferase</fullName>
        <shortName evidence="1">GSA-AT</shortName>
    </alternativeName>
</protein>
<sequence>MTSSTTTRSEALFERARAVTPGGVNSPVRAFKSVGGVPRFIREAHGAYLTDMDDTRYVDYIGSWGPMILGHDHPTIREAIATALTGGTSFGAPGEREVELAELVTRLTGAGRVRFVNSGTEATMSALRLARGFTGRKFIVKFRGNYHGHADGLLVEAGSGLLTNAEGVLGSAAPSSAGVPEEYASLTLVSEYNDPAALDALMRLRGHEVAAVIFEPVVGNAGVLVPTPDFLEALHRVKASGALLVADEVMTGFRLSLNGATGLLGLEPDLTCWGKIIGGGLPVGAYGGRADVMDFVSPQGPVYQAGTLSGNPLAMAAGLATLQTLEADPGIYGRLEAYTAALASGLRAAADEAGVPVSINRVGSMLTAFHQDVPDGSIRTYADAARSDTTGFATWFQGMLARGVYWAPSQFESIFVSGAHTDRELNVTLEAARSAYGGTPV</sequence>
<name>GSA_DEIDV</name>
<keyword id="KW-0963">Cytoplasm</keyword>
<keyword id="KW-0413">Isomerase</keyword>
<keyword id="KW-0627">Porphyrin biosynthesis</keyword>
<keyword id="KW-0663">Pyridoxal phosphate</keyword>
<keyword id="KW-1185">Reference proteome</keyword>
<evidence type="ECO:0000255" key="1">
    <source>
        <dbReference type="HAMAP-Rule" id="MF_00375"/>
    </source>
</evidence>
<feature type="chain" id="PRO_0000382302" description="Glutamate-1-semialdehyde 2,1-aminomutase">
    <location>
        <begin position="1"/>
        <end position="441"/>
    </location>
</feature>
<feature type="modified residue" description="N6-(pyridoxal phosphate)lysine" evidence="1">
    <location>
        <position position="275"/>
    </location>
</feature>
<dbReference type="EC" id="5.4.3.8" evidence="1"/>
<dbReference type="EMBL" id="CP001114">
    <property type="protein sequence ID" value="ACO46555.1"/>
    <property type="molecule type" value="Genomic_DNA"/>
</dbReference>
<dbReference type="RefSeq" id="WP_012693678.1">
    <property type="nucleotide sequence ID" value="NC_012526.1"/>
</dbReference>
<dbReference type="SMR" id="C1CWI8"/>
<dbReference type="STRING" id="546414.Deide_15910"/>
<dbReference type="PaxDb" id="546414-Deide_15910"/>
<dbReference type="KEGG" id="ddr:Deide_15910"/>
<dbReference type="eggNOG" id="COG0001">
    <property type="taxonomic scope" value="Bacteria"/>
</dbReference>
<dbReference type="HOGENOM" id="CLU_016922_1_5_0"/>
<dbReference type="OrthoDB" id="9801052at2"/>
<dbReference type="UniPathway" id="UPA00251">
    <property type="reaction ID" value="UER00317"/>
</dbReference>
<dbReference type="Proteomes" id="UP000002208">
    <property type="component" value="Chromosome"/>
</dbReference>
<dbReference type="GO" id="GO:0005737">
    <property type="term" value="C:cytoplasm"/>
    <property type="evidence" value="ECO:0007669"/>
    <property type="project" value="UniProtKB-SubCell"/>
</dbReference>
<dbReference type="GO" id="GO:0042286">
    <property type="term" value="F:glutamate-1-semialdehyde 2,1-aminomutase activity"/>
    <property type="evidence" value="ECO:0007669"/>
    <property type="project" value="UniProtKB-UniRule"/>
</dbReference>
<dbReference type="GO" id="GO:0030170">
    <property type="term" value="F:pyridoxal phosphate binding"/>
    <property type="evidence" value="ECO:0007669"/>
    <property type="project" value="InterPro"/>
</dbReference>
<dbReference type="GO" id="GO:0008483">
    <property type="term" value="F:transaminase activity"/>
    <property type="evidence" value="ECO:0007669"/>
    <property type="project" value="InterPro"/>
</dbReference>
<dbReference type="GO" id="GO:0006782">
    <property type="term" value="P:protoporphyrinogen IX biosynthetic process"/>
    <property type="evidence" value="ECO:0007669"/>
    <property type="project" value="UniProtKB-UniRule"/>
</dbReference>
<dbReference type="CDD" id="cd00610">
    <property type="entry name" value="OAT_like"/>
    <property type="match status" value="1"/>
</dbReference>
<dbReference type="FunFam" id="3.40.640.10:FF:000021">
    <property type="entry name" value="Glutamate-1-semialdehyde 2,1-aminomutase"/>
    <property type="match status" value="1"/>
</dbReference>
<dbReference type="Gene3D" id="3.90.1150.10">
    <property type="entry name" value="Aspartate Aminotransferase, domain 1"/>
    <property type="match status" value="1"/>
</dbReference>
<dbReference type="Gene3D" id="3.40.640.10">
    <property type="entry name" value="Type I PLP-dependent aspartate aminotransferase-like (Major domain)"/>
    <property type="match status" value="1"/>
</dbReference>
<dbReference type="HAMAP" id="MF_00375">
    <property type="entry name" value="HemL_aminotrans_3"/>
    <property type="match status" value="1"/>
</dbReference>
<dbReference type="InterPro" id="IPR004639">
    <property type="entry name" value="4pyrrol_synth_GluAld_NH2Trfase"/>
</dbReference>
<dbReference type="InterPro" id="IPR005814">
    <property type="entry name" value="Aminotrans_3"/>
</dbReference>
<dbReference type="InterPro" id="IPR049704">
    <property type="entry name" value="Aminotrans_3_PPA_site"/>
</dbReference>
<dbReference type="InterPro" id="IPR015424">
    <property type="entry name" value="PyrdxlP-dep_Trfase"/>
</dbReference>
<dbReference type="InterPro" id="IPR015421">
    <property type="entry name" value="PyrdxlP-dep_Trfase_major"/>
</dbReference>
<dbReference type="InterPro" id="IPR015422">
    <property type="entry name" value="PyrdxlP-dep_Trfase_small"/>
</dbReference>
<dbReference type="NCBIfam" id="TIGR00713">
    <property type="entry name" value="hemL"/>
    <property type="match status" value="1"/>
</dbReference>
<dbReference type="NCBIfam" id="NF000818">
    <property type="entry name" value="PRK00062.1"/>
    <property type="match status" value="1"/>
</dbReference>
<dbReference type="PANTHER" id="PTHR43713">
    <property type="entry name" value="GLUTAMATE-1-SEMIALDEHYDE 2,1-AMINOMUTASE"/>
    <property type="match status" value="1"/>
</dbReference>
<dbReference type="PANTHER" id="PTHR43713:SF3">
    <property type="entry name" value="GLUTAMATE-1-SEMIALDEHYDE 2,1-AMINOMUTASE 1, CHLOROPLASTIC-RELATED"/>
    <property type="match status" value="1"/>
</dbReference>
<dbReference type="Pfam" id="PF00202">
    <property type="entry name" value="Aminotran_3"/>
    <property type="match status" value="1"/>
</dbReference>
<dbReference type="SUPFAM" id="SSF53383">
    <property type="entry name" value="PLP-dependent transferases"/>
    <property type="match status" value="1"/>
</dbReference>
<dbReference type="PROSITE" id="PS00600">
    <property type="entry name" value="AA_TRANSFER_CLASS_3"/>
    <property type="match status" value="1"/>
</dbReference>
<organism>
    <name type="scientific">Deinococcus deserti (strain DSM 17065 / CIP 109153 / LMG 22923 / VCD115)</name>
    <dbReference type="NCBI Taxonomy" id="546414"/>
    <lineage>
        <taxon>Bacteria</taxon>
        <taxon>Thermotogati</taxon>
        <taxon>Deinococcota</taxon>
        <taxon>Deinococci</taxon>
        <taxon>Deinococcales</taxon>
        <taxon>Deinococcaceae</taxon>
        <taxon>Deinococcus</taxon>
    </lineage>
</organism>
<gene>
    <name evidence="1" type="primary">hemL</name>
    <name type="ordered locus">Deide_15910</name>
</gene>